<dbReference type="EC" id="2.3.1.225"/>
<dbReference type="EMBL" id="CR382125">
    <property type="protein sequence ID" value="CAG99128.1"/>
    <property type="molecule type" value="Genomic_DNA"/>
</dbReference>
<dbReference type="RefSeq" id="XP_454041.1">
    <property type="nucleotide sequence ID" value="XM_454041.1"/>
</dbReference>
<dbReference type="SMR" id="Q6CPU8"/>
<dbReference type="FunCoup" id="Q6CPU8">
    <property type="interactions" value="471"/>
</dbReference>
<dbReference type="STRING" id="284590.Q6CPU8"/>
<dbReference type="PaxDb" id="284590-Q6CPU8"/>
<dbReference type="DNASU" id="2894120"/>
<dbReference type="KEGG" id="kla:KLLA0_E02069g"/>
<dbReference type="eggNOG" id="KOG1315">
    <property type="taxonomic scope" value="Eukaryota"/>
</dbReference>
<dbReference type="HOGENOM" id="CLU_027721_0_0_1"/>
<dbReference type="InParanoid" id="Q6CPU8"/>
<dbReference type="OMA" id="YTYFKVI"/>
<dbReference type="Proteomes" id="UP000000598">
    <property type="component" value="Chromosome E"/>
</dbReference>
<dbReference type="GO" id="GO:0005774">
    <property type="term" value="C:vacuolar membrane"/>
    <property type="evidence" value="ECO:0007669"/>
    <property type="project" value="UniProtKB-SubCell"/>
</dbReference>
<dbReference type="GO" id="GO:0019706">
    <property type="term" value="F:protein-cysteine S-palmitoyltransferase activity"/>
    <property type="evidence" value="ECO:0007669"/>
    <property type="project" value="UniProtKB-EC"/>
</dbReference>
<dbReference type="InterPro" id="IPR001594">
    <property type="entry name" value="Palmitoyltrfase_DHHC"/>
</dbReference>
<dbReference type="InterPro" id="IPR039859">
    <property type="entry name" value="PFA4/ZDH16/20/ERF2-like"/>
</dbReference>
<dbReference type="PANTHER" id="PTHR12246">
    <property type="entry name" value="PALMITOYLTRANSFERASE ZDHHC16"/>
    <property type="match status" value="1"/>
</dbReference>
<dbReference type="Pfam" id="PF01529">
    <property type="entry name" value="DHHC"/>
    <property type="match status" value="1"/>
</dbReference>
<dbReference type="PROSITE" id="PS50216">
    <property type="entry name" value="DHHC"/>
    <property type="match status" value="1"/>
</dbReference>
<comment type="function">
    <text evidence="1">Palmitoyltransferase specific for VAC8. Palmitoylates VAC8 at one or more of its N-terminal cysteine residues, which is required for its proper membrane localization (By similarity).</text>
</comment>
<comment type="catalytic activity">
    <reaction>
        <text>L-cysteinyl-[protein] + hexadecanoyl-CoA = S-hexadecanoyl-L-cysteinyl-[protein] + CoA</text>
        <dbReference type="Rhea" id="RHEA:36683"/>
        <dbReference type="Rhea" id="RHEA-COMP:10131"/>
        <dbReference type="Rhea" id="RHEA-COMP:11032"/>
        <dbReference type="ChEBI" id="CHEBI:29950"/>
        <dbReference type="ChEBI" id="CHEBI:57287"/>
        <dbReference type="ChEBI" id="CHEBI:57379"/>
        <dbReference type="ChEBI" id="CHEBI:74151"/>
        <dbReference type="EC" id="2.3.1.225"/>
    </reaction>
</comment>
<comment type="subcellular location">
    <subcellularLocation>
        <location evidence="1">Vacuole membrane</location>
        <topology evidence="1">Multi-pass membrane protein</topology>
    </subcellularLocation>
</comment>
<comment type="domain">
    <text evidence="1">The DHHC domain is required for palmitoyltransferase activity.</text>
</comment>
<comment type="PTM">
    <text evidence="1">Autopalmitoylated.</text>
</comment>
<comment type="similarity">
    <text evidence="4">Belongs to the DHHC palmitoyltransferase family. PFA3 subfamily.</text>
</comment>
<organism>
    <name type="scientific">Kluyveromyces lactis (strain ATCC 8585 / CBS 2359 / DSM 70799 / NBRC 1267 / NRRL Y-1140 / WM37)</name>
    <name type="common">Yeast</name>
    <name type="synonym">Candida sphaerica</name>
    <dbReference type="NCBI Taxonomy" id="284590"/>
    <lineage>
        <taxon>Eukaryota</taxon>
        <taxon>Fungi</taxon>
        <taxon>Dikarya</taxon>
        <taxon>Ascomycota</taxon>
        <taxon>Saccharomycotina</taxon>
        <taxon>Saccharomycetes</taxon>
        <taxon>Saccharomycetales</taxon>
        <taxon>Saccharomycetaceae</taxon>
        <taxon>Kluyveromyces</taxon>
    </lineage>
</organism>
<feature type="chain" id="PRO_0000212956" description="Palmitoyltransferase PFA3">
    <location>
        <begin position="1"/>
        <end position="325"/>
    </location>
</feature>
<feature type="topological domain" description="Cytoplasmic" evidence="2">
    <location>
        <begin position="1"/>
        <end position="5"/>
    </location>
</feature>
<feature type="transmembrane region" description="Helical" evidence="2">
    <location>
        <begin position="6"/>
        <end position="26"/>
    </location>
</feature>
<feature type="topological domain" description="Lumenal" evidence="2">
    <location>
        <begin position="27"/>
        <end position="35"/>
    </location>
</feature>
<feature type="transmembrane region" description="Helical" evidence="2">
    <location>
        <begin position="36"/>
        <end position="56"/>
    </location>
</feature>
<feature type="topological domain" description="Cytoplasmic" evidence="2">
    <location>
        <begin position="57"/>
        <end position="146"/>
    </location>
</feature>
<feature type="transmembrane region" description="Helical" evidence="2">
    <location>
        <begin position="147"/>
        <end position="167"/>
    </location>
</feature>
<feature type="topological domain" description="Lumenal" evidence="2">
    <location>
        <begin position="168"/>
        <end position="185"/>
    </location>
</feature>
<feature type="transmembrane region" description="Helical" evidence="2">
    <location>
        <begin position="186"/>
        <end position="206"/>
    </location>
</feature>
<feature type="topological domain" description="Cytoplasmic" evidence="2">
    <location>
        <begin position="207"/>
        <end position="325"/>
    </location>
</feature>
<feature type="domain" description="DHHC" evidence="3">
    <location>
        <begin position="103"/>
        <end position="153"/>
    </location>
</feature>
<reference key="1">
    <citation type="journal article" date="2004" name="Nature">
        <title>Genome evolution in yeasts.</title>
        <authorList>
            <person name="Dujon B."/>
            <person name="Sherman D."/>
            <person name="Fischer G."/>
            <person name="Durrens P."/>
            <person name="Casaregola S."/>
            <person name="Lafontaine I."/>
            <person name="de Montigny J."/>
            <person name="Marck C."/>
            <person name="Neuveglise C."/>
            <person name="Talla E."/>
            <person name="Goffard N."/>
            <person name="Frangeul L."/>
            <person name="Aigle M."/>
            <person name="Anthouard V."/>
            <person name="Babour A."/>
            <person name="Barbe V."/>
            <person name="Barnay S."/>
            <person name="Blanchin S."/>
            <person name="Beckerich J.-M."/>
            <person name="Beyne E."/>
            <person name="Bleykasten C."/>
            <person name="Boisrame A."/>
            <person name="Boyer J."/>
            <person name="Cattolico L."/>
            <person name="Confanioleri F."/>
            <person name="de Daruvar A."/>
            <person name="Despons L."/>
            <person name="Fabre E."/>
            <person name="Fairhead C."/>
            <person name="Ferry-Dumazet H."/>
            <person name="Groppi A."/>
            <person name="Hantraye F."/>
            <person name="Hennequin C."/>
            <person name="Jauniaux N."/>
            <person name="Joyet P."/>
            <person name="Kachouri R."/>
            <person name="Kerrest A."/>
            <person name="Koszul R."/>
            <person name="Lemaire M."/>
            <person name="Lesur I."/>
            <person name="Ma L."/>
            <person name="Muller H."/>
            <person name="Nicaud J.-M."/>
            <person name="Nikolski M."/>
            <person name="Oztas S."/>
            <person name="Ozier-Kalogeropoulos O."/>
            <person name="Pellenz S."/>
            <person name="Potier S."/>
            <person name="Richard G.-F."/>
            <person name="Straub M.-L."/>
            <person name="Suleau A."/>
            <person name="Swennen D."/>
            <person name="Tekaia F."/>
            <person name="Wesolowski-Louvel M."/>
            <person name="Westhof E."/>
            <person name="Wirth B."/>
            <person name="Zeniou-Meyer M."/>
            <person name="Zivanovic Y."/>
            <person name="Bolotin-Fukuhara M."/>
            <person name="Thierry A."/>
            <person name="Bouchier C."/>
            <person name="Caudron B."/>
            <person name="Scarpelli C."/>
            <person name="Gaillardin C."/>
            <person name="Weissenbach J."/>
            <person name="Wincker P."/>
            <person name="Souciet J.-L."/>
        </authorList>
    </citation>
    <scope>NUCLEOTIDE SEQUENCE [LARGE SCALE GENOMIC DNA]</scope>
    <source>
        <strain>ATCC 8585 / CBS 2359 / DSM 70799 / NBRC 1267 / NRRL Y-1140 / WM37</strain>
    </source>
</reference>
<name>PFA3_KLULA</name>
<gene>
    <name type="primary">PFA3</name>
    <name type="ordered locus">KLLA0E02068g</name>
</gene>
<sequence>MLLDRIGFYFPKALSNFLILYTCCICFSRIDILPRIVNVVLLITLSSFALYTYWKIIRVGAGSPLEYSFLKIQSIDNVLNRTEQPPDIIKDNCIFVKRDGSFRFCQTCEIWKPDRCHHCSKCNKCFLKMDHHCPWFASCVGFRNQKFFVQFLAYTTVYSLYVLLMTSAQLYSWFRQMKYKSELLDLHLLVVWVLSVIAAIATFAFTTYTIWLVTKNETTIEQYEWGNIRHDLEIYGDSINCNMGSVDNVFDLGSRSANFNCVMGASWAELLLPIQVRADDPFDPYANQGLFFPVQSDTYRIYRESVNLQQRLITRLTLRPSIEHI</sequence>
<evidence type="ECO:0000250" key="1"/>
<evidence type="ECO:0000255" key="2"/>
<evidence type="ECO:0000255" key="3">
    <source>
        <dbReference type="PROSITE-ProRule" id="PRU00067"/>
    </source>
</evidence>
<evidence type="ECO:0000305" key="4"/>
<accession>Q6CPU8</accession>
<proteinExistence type="inferred from homology"/>
<protein>
    <recommendedName>
        <fullName>Palmitoyltransferase PFA3</fullName>
        <ecNumber>2.3.1.225</ecNumber>
    </recommendedName>
    <alternativeName>
        <fullName>Protein fatty acyltransferase 3</fullName>
    </alternativeName>
</protein>
<keyword id="KW-0012">Acyltransferase</keyword>
<keyword id="KW-0449">Lipoprotein</keyword>
<keyword id="KW-0472">Membrane</keyword>
<keyword id="KW-0564">Palmitate</keyword>
<keyword id="KW-1185">Reference proteome</keyword>
<keyword id="KW-0808">Transferase</keyword>
<keyword id="KW-0812">Transmembrane</keyword>
<keyword id="KW-1133">Transmembrane helix</keyword>
<keyword id="KW-0926">Vacuole</keyword>